<proteinExistence type="inferred from homology"/>
<keyword id="KW-0997">Cell inner membrane</keyword>
<keyword id="KW-1003">Cell membrane</keyword>
<keyword id="KW-0472">Membrane</keyword>
<keyword id="KW-0812">Transmembrane</keyword>
<keyword id="KW-1133">Transmembrane helix</keyword>
<sequence length="131" mass="15015">MTTKRKPYVRPMTSTWWKKLPFYRFYMLREGTAVPAVWFSIELIFGLFALKNGPEAWAGFVDFLQNPVIVIINLITLAAALLHTKTWFELAPKAANIIVKDEKMGPEPIIKSLWAVTVVATIVILFVALYW</sequence>
<organism>
    <name type="scientific">Escherichia coli O8 (strain IAI1)</name>
    <dbReference type="NCBI Taxonomy" id="585034"/>
    <lineage>
        <taxon>Bacteria</taxon>
        <taxon>Pseudomonadati</taxon>
        <taxon>Pseudomonadota</taxon>
        <taxon>Gammaproteobacteria</taxon>
        <taxon>Enterobacterales</taxon>
        <taxon>Enterobacteriaceae</taxon>
        <taxon>Escherichia</taxon>
    </lineage>
</organism>
<gene>
    <name evidence="1" type="primary">frdC</name>
    <name type="ordered locus">ECIAI1_4389</name>
</gene>
<accession>B7M8R7</accession>
<protein>
    <recommendedName>
        <fullName evidence="1">Fumarate reductase subunit C</fullName>
    </recommendedName>
    <alternativeName>
        <fullName evidence="1">Fumarate reductase 15 kDa hydrophobic protein</fullName>
    </alternativeName>
    <alternativeName>
        <fullName evidence="1">Quinol-fumarate reductase subunit C</fullName>
        <shortName evidence="1">QFR subunit C</shortName>
    </alternativeName>
</protein>
<evidence type="ECO:0000255" key="1">
    <source>
        <dbReference type="HAMAP-Rule" id="MF_00708"/>
    </source>
</evidence>
<name>FRDC_ECO8A</name>
<reference key="1">
    <citation type="journal article" date="2009" name="PLoS Genet.">
        <title>Organised genome dynamics in the Escherichia coli species results in highly diverse adaptive paths.</title>
        <authorList>
            <person name="Touchon M."/>
            <person name="Hoede C."/>
            <person name="Tenaillon O."/>
            <person name="Barbe V."/>
            <person name="Baeriswyl S."/>
            <person name="Bidet P."/>
            <person name="Bingen E."/>
            <person name="Bonacorsi S."/>
            <person name="Bouchier C."/>
            <person name="Bouvet O."/>
            <person name="Calteau A."/>
            <person name="Chiapello H."/>
            <person name="Clermont O."/>
            <person name="Cruveiller S."/>
            <person name="Danchin A."/>
            <person name="Diard M."/>
            <person name="Dossat C."/>
            <person name="Karoui M.E."/>
            <person name="Frapy E."/>
            <person name="Garry L."/>
            <person name="Ghigo J.M."/>
            <person name="Gilles A.M."/>
            <person name="Johnson J."/>
            <person name="Le Bouguenec C."/>
            <person name="Lescat M."/>
            <person name="Mangenot S."/>
            <person name="Martinez-Jehanne V."/>
            <person name="Matic I."/>
            <person name="Nassif X."/>
            <person name="Oztas S."/>
            <person name="Petit M.A."/>
            <person name="Pichon C."/>
            <person name="Rouy Z."/>
            <person name="Ruf C.S."/>
            <person name="Schneider D."/>
            <person name="Tourret J."/>
            <person name="Vacherie B."/>
            <person name="Vallenet D."/>
            <person name="Medigue C."/>
            <person name="Rocha E.P.C."/>
            <person name="Denamur E."/>
        </authorList>
    </citation>
    <scope>NUCLEOTIDE SEQUENCE [LARGE SCALE GENOMIC DNA]</scope>
    <source>
        <strain>IAI1</strain>
    </source>
</reference>
<dbReference type="EMBL" id="CU928160">
    <property type="protein sequence ID" value="CAR01132.1"/>
    <property type="molecule type" value="Genomic_DNA"/>
</dbReference>
<dbReference type="RefSeq" id="WP_000208757.1">
    <property type="nucleotide sequence ID" value="NC_011741.1"/>
</dbReference>
<dbReference type="SMR" id="B7M8R7"/>
<dbReference type="GeneID" id="93777670"/>
<dbReference type="KEGG" id="ecr:ECIAI1_4389"/>
<dbReference type="HOGENOM" id="CLU_156492_0_0_6"/>
<dbReference type="GO" id="GO:0045283">
    <property type="term" value="C:fumarate reductase complex"/>
    <property type="evidence" value="ECO:0007669"/>
    <property type="project" value="UniProtKB-UniRule"/>
</dbReference>
<dbReference type="GO" id="GO:0005886">
    <property type="term" value="C:plasma membrane"/>
    <property type="evidence" value="ECO:0007669"/>
    <property type="project" value="UniProtKB-SubCell"/>
</dbReference>
<dbReference type="GO" id="GO:0000104">
    <property type="term" value="F:succinate dehydrogenase activity"/>
    <property type="evidence" value="ECO:0007669"/>
    <property type="project" value="UniProtKB-UniRule"/>
</dbReference>
<dbReference type="CDD" id="cd00546">
    <property type="entry name" value="QFR_TypeD_subunitC"/>
    <property type="match status" value="1"/>
</dbReference>
<dbReference type="FunFam" id="1.20.1300.10:FF:000003">
    <property type="entry name" value="Fumarate reductase subunit C"/>
    <property type="match status" value="1"/>
</dbReference>
<dbReference type="Gene3D" id="1.20.1300.10">
    <property type="entry name" value="Fumarate reductase/succinate dehydrogenase, transmembrane subunit"/>
    <property type="match status" value="1"/>
</dbReference>
<dbReference type="HAMAP" id="MF_00708">
    <property type="entry name" value="Fumarate_red_C"/>
    <property type="match status" value="1"/>
</dbReference>
<dbReference type="InterPro" id="IPR003510">
    <property type="entry name" value="Fumarate_red_C"/>
</dbReference>
<dbReference type="InterPro" id="IPR034804">
    <property type="entry name" value="SQR/QFR_C/D"/>
</dbReference>
<dbReference type="NCBIfam" id="NF003445">
    <property type="entry name" value="PRK04987.1"/>
    <property type="match status" value="1"/>
</dbReference>
<dbReference type="Pfam" id="PF02300">
    <property type="entry name" value="Fumarate_red_C"/>
    <property type="match status" value="1"/>
</dbReference>
<dbReference type="PIRSF" id="PIRSF000180">
    <property type="entry name" value="FrdC"/>
    <property type="match status" value="1"/>
</dbReference>
<dbReference type="SUPFAM" id="SSF81343">
    <property type="entry name" value="Fumarate reductase respiratory complex transmembrane subunits"/>
    <property type="match status" value="1"/>
</dbReference>
<comment type="function">
    <text evidence="1">Two distinct, membrane-bound, FAD-containing enzymes are responsible for the catalysis of fumarate and succinate interconversion; fumarate reductase is used in anaerobic growth, and succinate dehydrogenase is used in aerobic growth. Anchors the catalytic components of the fumarate reductase complex to the cell inner membrane, binds quinones.</text>
</comment>
<comment type="subunit">
    <text evidence="1">Part of an enzyme complex containing four subunits: a flavoprotein (FrdA), an iron-sulfur protein (FrdB), and two hydrophobic anchor proteins (FrdC and FrdD).</text>
</comment>
<comment type="subcellular location">
    <subcellularLocation>
        <location evidence="1">Cell inner membrane</location>
        <topology evidence="1">Multi-pass membrane protein</topology>
    </subcellularLocation>
</comment>
<comment type="similarity">
    <text evidence="1">Belongs to the FrdC family.</text>
</comment>
<feature type="chain" id="PRO_1000132372" description="Fumarate reductase subunit C">
    <location>
        <begin position="1"/>
        <end position="131"/>
    </location>
</feature>
<feature type="transmembrane region" description="Helical" evidence="1">
    <location>
        <begin position="30"/>
        <end position="50"/>
    </location>
</feature>
<feature type="transmembrane region" description="Helical" evidence="1">
    <location>
        <begin position="63"/>
        <end position="83"/>
    </location>
</feature>
<feature type="transmembrane region" description="Helical" evidence="1">
    <location>
        <begin position="109"/>
        <end position="129"/>
    </location>
</feature>